<proteinExistence type="inferred from homology"/>
<gene>
    <name evidence="1" type="primary">dcd</name>
    <name type="ordered locus">Wbm0292</name>
</gene>
<accession>Q5GSZ3</accession>
<name>DCD_WOLTR</name>
<organism>
    <name type="scientific">Wolbachia sp. subsp. Brugia malayi (strain TRS)</name>
    <dbReference type="NCBI Taxonomy" id="292805"/>
    <lineage>
        <taxon>Bacteria</taxon>
        <taxon>Pseudomonadati</taxon>
        <taxon>Pseudomonadota</taxon>
        <taxon>Alphaproteobacteria</taxon>
        <taxon>Rickettsiales</taxon>
        <taxon>Anaplasmataceae</taxon>
        <taxon>Wolbachieae</taxon>
        <taxon>Wolbachia</taxon>
    </lineage>
</organism>
<dbReference type="EC" id="3.5.4.13" evidence="1"/>
<dbReference type="EMBL" id="AE017321">
    <property type="protein sequence ID" value="AAW70881.1"/>
    <property type="molecule type" value="Genomic_DNA"/>
</dbReference>
<dbReference type="RefSeq" id="WP_011256491.1">
    <property type="nucleotide sequence ID" value="NC_006833.1"/>
</dbReference>
<dbReference type="SMR" id="Q5GSZ3"/>
<dbReference type="STRING" id="292805.Wbm0292"/>
<dbReference type="KEGG" id="wbm:Wbm0292"/>
<dbReference type="eggNOG" id="COG0717">
    <property type="taxonomic scope" value="Bacteria"/>
</dbReference>
<dbReference type="HOGENOM" id="CLU_087476_4_0_5"/>
<dbReference type="UniPathway" id="UPA00610">
    <property type="reaction ID" value="UER00665"/>
</dbReference>
<dbReference type="Proteomes" id="UP000000534">
    <property type="component" value="Chromosome"/>
</dbReference>
<dbReference type="GO" id="GO:0008829">
    <property type="term" value="F:dCTP deaminase activity"/>
    <property type="evidence" value="ECO:0007669"/>
    <property type="project" value="UniProtKB-UniRule"/>
</dbReference>
<dbReference type="GO" id="GO:0000166">
    <property type="term" value="F:nucleotide binding"/>
    <property type="evidence" value="ECO:0007669"/>
    <property type="project" value="UniProtKB-KW"/>
</dbReference>
<dbReference type="GO" id="GO:0006226">
    <property type="term" value="P:dUMP biosynthetic process"/>
    <property type="evidence" value="ECO:0007669"/>
    <property type="project" value="UniProtKB-UniPathway"/>
</dbReference>
<dbReference type="GO" id="GO:0006229">
    <property type="term" value="P:dUTP biosynthetic process"/>
    <property type="evidence" value="ECO:0007669"/>
    <property type="project" value="UniProtKB-UniRule"/>
</dbReference>
<dbReference type="CDD" id="cd07557">
    <property type="entry name" value="trimeric_dUTPase"/>
    <property type="match status" value="1"/>
</dbReference>
<dbReference type="FunFam" id="2.70.40.10:FF:000001">
    <property type="entry name" value="dCTP deaminase"/>
    <property type="match status" value="1"/>
</dbReference>
<dbReference type="Gene3D" id="2.70.40.10">
    <property type="match status" value="1"/>
</dbReference>
<dbReference type="HAMAP" id="MF_00146">
    <property type="entry name" value="dCTP_deaminase"/>
    <property type="match status" value="1"/>
</dbReference>
<dbReference type="InterPro" id="IPR011962">
    <property type="entry name" value="dCTP_deaminase"/>
</dbReference>
<dbReference type="InterPro" id="IPR036157">
    <property type="entry name" value="dUTPase-like_sf"/>
</dbReference>
<dbReference type="InterPro" id="IPR033704">
    <property type="entry name" value="dUTPase_trimeric"/>
</dbReference>
<dbReference type="NCBIfam" id="TIGR02274">
    <property type="entry name" value="dCTP_deam"/>
    <property type="match status" value="1"/>
</dbReference>
<dbReference type="PANTHER" id="PTHR42680">
    <property type="entry name" value="DCTP DEAMINASE"/>
    <property type="match status" value="1"/>
</dbReference>
<dbReference type="PANTHER" id="PTHR42680:SF3">
    <property type="entry name" value="DCTP DEAMINASE"/>
    <property type="match status" value="1"/>
</dbReference>
<dbReference type="Pfam" id="PF22769">
    <property type="entry name" value="DCD"/>
    <property type="match status" value="1"/>
</dbReference>
<dbReference type="SUPFAM" id="SSF51283">
    <property type="entry name" value="dUTPase-like"/>
    <property type="match status" value="1"/>
</dbReference>
<keyword id="KW-0378">Hydrolase</keyword>
<keyword id="KW-0546">Nucleotide metabolism</keyword>
<keyword id="KW-0547">Nucleotide-binding</keyword>
<keyword id="KW-1185">Reference proteome</keyword>
<evidence type="ECO:0000255" key="1">
    <source>
        <dbReference type="HAMAP-Rule" id="MF_00146"/>
    </source>
</evidence>
<protein>
    <recommendedName>
        <fullName evidence="1">dCTP deaminase</fullName>
        <ecNumber evidence="1">3.5.4.13</ecNumber>
    </recommendedName>
    <alternativeName>
        <fullName evidence="1">Deoxycytidine triphosphate deaminase</fullName>
    </alternativeName>
</protein>
<comment type="function">
    <text evidence="1">Catalyzes the deamination of dCTP to dUTP.</text>
</comment>
<comment type="catalytic activity">
    <reaction evidence="1">
        <text>dCTP + H2O + H(+) = dUTP + NH4(+)</text>
        <dbReference type="Rhea" id="RHEA:22680"/>
        <dbReference type="ChEBI" id="CHEBI:15377"/>
        <dbReference type="ChEBI" id="CHEBI:15378"/>
        <dbReference type="ChEBI" id="CHEBI:28938"/>
        <dbReference type="ChEBI" id="CHEBI:61481"/>
        <dbReference type="ChEBI" id="CHEBI:61555"/>
        <dbReference type="EC" id="3.5.4.13"/>
    </reaction>
</comment>
<comment type="pathway">
    <text evidence="1">Pyrimidine metabolism; dUMP biosynthesis; dUMP from dCTP (dUTP route): step 1/2.</text>
</comment>
<comment type="subunit">
    <text evidence="1">Homotrimer.</text>
</comment>
<comment type="similarity">
    <text evidence="1">Belongs to the dCTP deaminase family.</text>
</comment>
<reference key="1">
    <citation type="journal article" date="2005" name="PLoS Biol.">
        <title>The Wolbachia genome of Brugia malayi: endosymbiont evolution within a human pathogenic nematode.</title>
        <authorList>
            <person name="Foster J."/>
            <person name="Ganatra M."/>
            <person name="Kamal I."/>
            <person name="Ware J."/>
            <person name="Makarova K."/>
            <person name="Ivanova N."/>
            <person name="Bhattacharyya A."/>
            <person name="Kapatral V."/>
            <person name="Kumar S."/>
            <person name="Posfai J."/>
            <person name="Vincze T."/>
            <person name="Ingram J."/>
            <person name="Moran L."/>
            <person name="Lapidus A."/>
            <person name="Omelchenko M."/>
            <person name="Kyrpides N."/>
            <person name="Ghedin E."/>
            <person name="Wang S."/>
            <person name="Goltsman E."/>
            <person name="Joukov V."/>
            <person name="Ostrovskaya O."/>
            <person name="Tsukerman K."/>
            <person name="Mazur M."/>
            <person name="Comb D."/>
            <person name="Koonin E."/>
            <person name="Slatko B."/>
        </authorList>
    </citation>
    <scope>NUCLEOTIDE SEQUENCE [LARGE SCALE GENOMIC DNA]</scope>
    <source>
        <strain>TRS</strain>
    </source>
</reference>
<sequence length="185" mass="20578">MAVMPDKWIREKAESFGMIEPFVDHKSSKGVMSFGLSSYGYDARVDNKFKIFTNVNSAVVDPKDFSKNSFIDKETDVCIIPPNSFALASTVEYFHIPRDVLAICVGKSTYARCGIIVNVTPLEPGWKGHVTLEFSNTTPLPAKIYANEGACQFVFLSGESECEKSYDDIKGKYMNQHGITLPLVK</sequence>
<feature type="chain" id="PRO_1000009828" description="dCTP deaminase">
    <location>
        <begin position="1"/>
        <end position="185"/>
    </location>
</feature>
<feature type="active site" description="Proton donor/acceptor" evidence="1">
    <location>
        <position position="133"/>
    </location>
</feature>
<feature type="binding site" evidence="1">
    <location>
        <begin position="107"/>
        <end position="112"/>
    </location>
    <ligand>
        <name>dCTP</name>
        <dbReference type="ChEBI" id="CHEBI:61481"/>
    </ligand>
</feature>
<feature type="binding site" evidence="1">
    <location>
        <begin position="131"/>
        <end position="133"/>
    </location>
    <ligand>
        <name>dCTP</name>
        <dbReference type="ChEBI" id="CHEBI:61481"/>
    </ligand>
</feature>
<feature type="binding site" evidence="1">
    <location>
        <position position="152"/>
    </location>
    <ligand>
        <name>dCTP</name>
        <dbReference type="ChEBI" id="CHEBI:61481"/>
    </ligand>
</feature>
<feature type="binding site" evidence="1">
    <location>
        <position position="166"/>
    </location>
    <ligand>
        <name>dCTP</name>
        <dbReference type="ChEBI" id="CHEBI:61481"/>
    </ligand>
</feature>
<feature type="binding site" evidence="1">
    <location>
        <position position="176"/>
    </location>
    <ligand>
        <name>dCTP</name>
        <dbReference type="ChEBI" id="CHEBI:61481"/>
    </ligand>
</feature>